<keyword id="KW-0058">Aromatic hydrocarbons catabolism</keyword>
<keyword id="KW-0903">Direct protein sequencing</keyword>
<keyword id="KW-0808">Transferase</keyword>
<proteinExistence type="evidence at protein level"/>
<name>PCAI_ACIAD</name>
<protein>
    <recommendedName>
        <fullName>3-oxoadipate CoA-transferase subunit A</fullName>
        <ecNumber>2.8.3.6</ecNumber>
    </recommendedName>
    <alternativeName>
        <fullName>Beta-ketoadipate:succinyl-CoA transferase subunit A</fullName>
    </alternativeName>
</protein>
<comment type="catalytic activity">
    <reaction>
        <text>3-oxoadipate + succinyl-CoA = 3-oxoadipyl-CoA + succinate</text>
        <dbReference type="Rhea" id="RHEA:12048"/>
        <dbReference type="ChEBI" id="CHEBI:15775"/>
        <dbReference type="ChEBI" id="CHEBI:30031"/>
        <dbReference type="ChEBI" id="CHEBI:57292"/>
        <dbReference type="ChEBI" id="CHEBI:57348"/>
        <dbReference type="EC" id="2.8.3.6"/>
    </reaction>
</comment>
<comment type="pathway">
    <text>Aromatic compound metabolism; beta-ketoadipate pathway; acetyl-CoA and succinyl-CoA from 3-oxoadipate: step 1/2.</text>
</comment>
<comment type="subunit">
    <text evidence="1">Heterodimer.</text>
</comment>
<comment type="similarity">
    <text evidence="3">Belongs to the 3-oxoacid CoA-transferase subunit A family.</text>
</comment>
<feature type="chain" id="PRO_0000157906" description="3-oxoadipate CoA-transferase subunit A">
    <location>
        <begin position="1"/>
        <end position="228"/>
    </location>
</feature>
<feature type="binding site" evidence="2">
    <location>
        <begin position="25"/>
        <end position="31"/>
    </location>
    <ligand>
        <name>CoA</name>
        <dbReference type="ChEBI" id="CHEBI:57287"/>
    </ligand>
</feature>
<gene>
    <name type="primary">pcaI</name>
    <name type="ordered locus">ACIAD1704</name>
</gene>
<gene>
    <name type="primary">catI</name>
    <name type="ordered locus">ACIAD1448</name>
</gene>
<organism>
    <name type="scientific">Acinetobacter baylyi (strain ATCC 33305 / BD413 / ADP1)</name>
    <dbReference type="NCBI Taxonomy" id="62977"/>
    <lineage>
        <taxon>Bacteria</taxon>
        <taxon>Pseudomonadati</taxon>
        <taxon>Pseudomonadota</taxon>
        <taxon>Gammaproteobacteria</taxon>
        <taxon>Moraxellales</taxon>
        <taxon>Moraxellaceae</taxon>
        <taxon>Acinetobacter</taxon>
    </lineage>
</organism>
<accession>Q43973</accession>
<accession>Q43933</accession>
<reference key="1">
    <citation type="journal article" date="1994" name="Gene">
        <title>Contrasting patterns of evolutionary divergence within the Acinetobacter calcoaceticus pca operon.</title>
        <authorList>
            <person name="Kowalchuk G.A."/>
            <person name="Hartnett G.B."/>
            <person name="Benson A."/>
            <person name="Houghton J.E."/>
            <person name="Ngai K.-L."/>
            <person name="Ornston L.N."/>
        </authorList>
    </citation>
    <scope>NUCLEOTIDE SEQUENCE [GENOMIC DNA]</scope>
    <scope>PROTEIN SEQUENCE OF 1-34 (PCAI)</scope>
</reference>
<reference key="2">
    <citation type="journal article" date="1994" name="Gene">
        <title>Unusual G + C content and codon usage in catIJF, a segment of the ben-cat supra-operonic cluster in the Acinetobacter calcoaceticus chromosome.</title>
        <authorList>
            <person name="Shanley M.S."/>
            <person name="Harrison A."/>
            <person name="Parales R.E."/>
            <person name="Kowalchuk G."/>
            <person name="Mitchell D.J."/>
            <person name="Ornston L.N."/>
        </authorList>
    </citation>
    <scope>NUCLEOTIDE SEQUENCE [GENOMIC DNA] (CATI)</scope>
</reference>
<reference key="3">
    <citation type="journal article" date="2004" name="Nucleic Acids Res.">
        <title>Unique features revealed by the genome sequence of Acinetobacter sp. ADP1, a versatile and naturally transformation competent bacterium.</title>
        <authorList>
            <person name="Barbe V."/>
            <person name="Vallenet D."/>
            <person name="Fonknechten N."/>
            <person name="Kreimeyer A."/>
            <person name="Oztas S."/>
            <person name="Labarre L."/>
            <person name="Cruveiller S."/>
            <person name="Robert C."/>
            <person name="Duprat S."/>
            <person name="Wincker P."/>
            <person name="Ornston L.N."/>
            <person name="Weissenbach J."/>
            <person name="Marliere P."/>
            <person name="Cohen G.N."/>
            <person name="Medigue C."/>
        </authorList>
    </citation>
    <scope>NUCLEOTIDE SEQUENCE [LARGE SCALE GENOMIC DNA] (PCAI AND CATI)</scope>
    <source>
        <strain>ATCC 33305 / BD413 / ADP1</strain>
    </source>
</reference>
<evidence type="ECO:0000250" key="1"/>
<evidence type="ECO:0000255" key="2"/>
<evidence type="ECO:0000305" key="3"/>
<sequence length="228" mass="24074">MIDKSAATLTEALSQIHDGATILIGGFGTAGQPAELIDGLIELGRKNLTIVSNNAGNGDYGLAKLLKTGAVKKIICSFPRQADSYVFDELYRAGKIELEIVPQGNLACRIQAAGMGLGPIYTPTGFGTLLAEGKPTLNFDGKDYVLENPIKADFALIKAYKGDRWGNLVYRKSARNFGPIMAMAANVTIAQVSEVVALGELDPENVVTPGIFVQHVVPVQSTPASAAP</sequence>
<dbReference type="EC" id="2.8.3.6"/>
<dbReference type="EMBL" id="L05770">
    <property type="protein sequence ID" value="AAC37146.1"/>
    <property type="molecule type" value="Genomic_DNA"/>
</dbReference>
<dbReference type="EMBL" id="AF009224">
    <property type="protein sequence ID" value="AAC46432.1"/>
    <property type="molecule type" value="Genomic_DNA"/>
</dbReference>
<dbReference type="EMBL" id="CR543861">
    <property type="protein sequence ID" value="CAG68546.1"/>
    <property type="molecule type" value="Genomic_DNA"/>
</dbReference>
<dbReference type="EMBL" id="CR543861">
    <property type="protein sequence ID" value="CAG68311.1"/>
    <property type="molecule type" value="Genomic_DNA"/>
</dbReference>
<dbReference type="PIR" id="A44570">
    <property type="entry name" value="A44570"/>
</dbReference>
<dbReference type="RefSeq" id="WP_004925451.1">
    <property type="nucleotide sequence ID" value="NC_005966.1"/>
</dbReference>
<dbReference type="SMR" id="Q43973"/>
<dbReference type="KEGG" id="aci:ACIAD1448"/>
<dbReference type="KEGG" id="aci:ACIAD1704"/>
<dbReference type="eggNOG" id="COG1788">
    <property type="taxonomic scope" value="Bacteria"/>
</dbReference>
<dbReference type="HOGENOM" id="CLU_019942_2_1_6"/>
<dbReference type="OrthoDB" id="9777193at2"/>
<dbReference type="BioCyc" id="ASP62977:ACIAD_RS06690-MONOMER"/>
<dbReference type="BioCyc" id="ASP62977:ACIAD_RS07850-MONOMER"/>
<dbReference type="UniPathway" id="UPA00157">
    <property type="reaction ID" value="UER00262"/>
</dbReference>
<dbReference type="Proteomes" id="UP000000430">
    <property type="component" value="Chromosome"/>
</dbReference>
<dbReference type="GO" id="GO:0047569">
    <property type="term" value="F:3-oxoadipate CoA-transferase activity"/>
    <property type="evidence" value="ECO:0007669"/>
    <property type="project" value="UniProtKB-EC"/>
</dbReference>
<dbReference type="GO" id="GO:0042952">
    <property type="term" value="P:beta-ketoadipate pathway"/>
    <property type="evidence" value="ECO:0007669"/>
    <property type="project" value="UniProtKB-UniPathway"/>
</dbReference>
<dbReference type="Gene3D" id="3.40.1080.10">
    <property type="entry name" value="Glutaconate Coenzyme A-transferase"/>
    <property type="match status" value="1"/>
</dbReference>
<dbReference type="InterPro" id="IPR012792">
    <property type="entry name" value="3-oxoacid_CoA-transf_A"/>
</dbReference>
<dbReference type="InterPro" id="IPR004165">
    <property type="entry name" value="CoA_trans_fam_I"/>
</dbReference>
<dbReference type="InterPro" id="IPR004163">
    <property type="entry name" value="CoA_transf_BS"/>
</dbReference>
<dbReference type="InterPro" id="IPR037171">
    <property type="entry name" value="NagB/RpiA_transferase-like"/>
</dbReference>
<dbReference type="NCBIfam" id="TIGR02429">
    <property type="entry name" value="pcaI_scoA_fam"/>
    <property type="match status" value="1"/>
</dbReference>
<dbReference type="PANTHER" id="PTHR13707:SF60">
    <property type="entry name" value="ACETATE COA-TRANSFERASE SUBUNIT ALPHA"/>
    <property type="match status" value="1"/>
</dbReference>
<dbReference type="PANTHER" id="PTHR13707">
    <property type="entry name" value="KETOACID-COENZYME A TRANSFERASE"/>
    <property type="match status" value="1"/>
</dbReference>
<dbReference type="Pfam" id="PF01144">
    <property type="entry name" value="CoA_trans"/>
    <property type="match status" value="1"/>
</dbReference>
<dbReference type="SMART" id="SM00882">
    <property type="entry name" value="CoA_trans"/>
    <property type="match status" value="1"/>
</dbReference>
<dbReference type="SUPFAM" id="SSF100950">
    <property type="entry name" value="NagB/RpiA/CoA transferase-like"/>
    <property type="match status" value="1"/>
</dbReference>
<dbReference type="PROSITE" id="PS01273">
    <property type="entry name" value="COA_TRANSF_1"/>
    <property type="match status" value="1"/>
</dbReference>